<dbReference type="EC" id="3.4.21.26"/>
<dbReference type="EMBL" id="AB007631">
    <property type="protein sequence ID" value="BAA88239.1"/>
    <property type="molecule type" value="mRNA"/>
</dbReference>
<dbReference type="EMBL" id="AB022053">
    <property type="protein sequence ID" value="BAA83071.1"/>
    <property type="molecule type" value="Genomic_DNA"/>
</dbReference>
<dbReference type="EMBL" id="BC012869">
    <property type="protein sequence ID" value="AAH12869.1"/>
    <property type="molecule type" value="mRNA"/>
</dbReference>
<dbReference type="EMBL" id="BC050830">
    <property type="protein sequence ID" value="AAH50830.2"/>
    <property type="molecule type" value="mRNA"/>
</dbReference>
<dbReference type="CCDS" id="CCDS23826.1"/>
<dbReference type="PIR" id="JW0080">
    <property type="entry name" value="JW0080"/>
</dbReference>
<dbReference type="RefSeq" id="NP_035286.1">
    <property type="nucleotide sequence ID" value="NM_011156.3"/>
</dbReference>
<dbReference type="SMR" id="Q9QUR6"/>
<dbReference type="BioGRID" id="202358">
    <property type="interactions" value="5"/>
</dbReference>
<dbReference type="FunCoup" id="Q9QUR6">
    <property type="interactions" value="3011"/>
</dbReference>
<dbReference type="IntAct" id="Q9QUR6">
    <property type="interactions" value="4"/>
</dbReference>
<dbReference type="STRING" id="10090.ENSMUSP00000097444"/>
<dbReference type="BindingDB" id="Q9QUR6"/>
<dbReference type="ChEMBL" id="CHEMBL4935"/>
<dbReference type="ESTHER" id="mouse-ppce">
    <property type="family name" value="S9N_PPCE_Peptidase_S9"/>
</dbReference>
<dbReference type="MEROPS" id="S09.001"/>
<dbReference type="GlyGen" id="Q9QUR6">
    <property type="glycosylation" value="1 site, 1 O-linked glycan (1 site)"/>
</dbReference>
<dbReference type="iPTMnet" id="Q9QUR6"/>
<dbReference type="PhosphoSitePlus" id="Q9QUR6"/>
<dbReference type="SwissPalm" id="Q9QUR6"/>
<dbReference type="CPTAC" id="non-CPTAC-3867"/>
<dbReference type="jPOST" id="Q9QUR6"/>
<dbReference type="PaxDb" id="10090-ENSMUSP00000097444"/>
<dbReference type="ProteomicsDB" id="291709"/>
<dbReference type="Pumba" id="Q9QUR6"/>
<dbReference type="Antibodypedia" id="32113">
    <property type="antibodies" value="213 antibodies from 32 providers"/>
</dbReference>
<dbReference type="DNASU" id="19072"/>
<dbReference type="Ensembl" id="ENSMUST00000099858.4">
    <property type="protein sequence ID" value="ENSMUSP00000097444.3"/>
    <property type="gene ID" value="ENSMUSG00000019849.12"/>
</dbReference>
<dbReference type="GeneID" id="19072"/>
<dbReference type="KEGG" id="mmu:19072"/>
<dbReference type="UCSC" id="uc007ezx.1">
    <property type="organism name" value="mouse"/>
</dbReference>
<dbReference type="AGR" id="MGI:1270863"/>
<dbReference type="CTD" id="5550"/>
<dbReference type="MGI" id="MGI:1270863">
    <property type="gene designation" value="Prep"/>
</dbReference>
<dbReference type="VEuPathDB" id="HostDB:ENSMUSG00000019849"/>
<dbReference type="eggNOG" id="KOG2237">
    <property type="taxonomic scope" value="Eukaryota"/>
</dbReference>
<dbReference type="GeneTree" id="ENSGT00530000063426"/>
<dbReference type="HOGENOM" id="CLU_011290_1_1_1"/>
<dbReference type="InParanoid" id="Q9QUR6"/>
<dbReference type="OMA" id="LDPWFSH"/>
<dbReference type="OrthoDB" id="248387at2759"/>
<dbReference type="PhylomeDB" id="Q9QUR6"/>
<dbReference type="TreeFam" id="TF300655"/>
<dbReference type="BioGRID-ORCS" id="19072">
    <property type="hits" value="6 hits in 80 CRISPR screens"/>
</dbReference>
<dbReference type="ChiTaRS" id="Prep">
    <property type="organism name" value="mouse"/>
</dbReference>
<dbReference type="PRO" id="PR:Q9QUR6"/>
<dbReference type="Proteomes" id="UP000000589">
    <property type="component" value="Chromosome 10"/>
</dbReference>
<dbReference type="RNAct" id="Q9QUR6">
    <property type="molecule type" value="protein"/>
</dbReference>
<dbReference type="Bgee" id="ENSMUSG00000019849">
    <property type="expression patterns" value="Expressed in endoderm of midgut and 245 other cell types or tissues"/>
</dbReference>
<dbReference type="ExpressionAtlas" id="Q9QUR6">
    <property type="expression patterns" value="baseline and differential"/>
</dbReference>
<dbReference type="GO" id="GO:0005737">
    <property type="term" value="C:cytoplasm"/>
    <property type="evidence" value="ECO:0000314"/>
    <property type="project" value="UniProtKB"/>
</dbReference>
<dbReference type="GO" id="GO:0005829">
    <property type="term" value="C:cytosol"/>
    <property type="evidence" value="ECO:0007669"/>
    <property type="project" value="Ensembl"/>
</dbReference>
<dbReference type="GO" id="GO:0005576">
    <property type="term" value="C:extracellular region"/>
    <property type="evidence" value="ECO:0000314"/>
    <property type="project" value="MGI"/>
</dbReference>
<dbReference type="GO" id="GO:0005634">
    <property type="term" value="C:nucleus"/>
    <property type="evidence" value="ECO:0000314"/>
    <property type="project" value="MGI"/>
</dbReference>
<dbReference type="GO" id="GO:0004181">
    <property type="term" value="F:metallocarboxypeptidase activity"/>
    <property type="evidence" value="ECO:0000315"/>
    <property type="project" value="MGI"/>
</dbReference>
<dbReference type="GO" id="GO:0004252">
    <property type="term" value="F:serine-type endopeptidase activity"/>
    <property type="evidence" value="ECO:0007669"/>
    <property type="project" value="UniProtKB-EC"/>
</dbReference>
<dbReference type="GO" id="GO:0002003">
    <property type="term" value="P:angiotensin maturation"/>
    <property type="evidence" value="ECO:0000315"/>
    <property type="project" value="MGI"/>
</dbReference>
<dbReference type="FunFam" id="2.130.10.120:FF:000001">
    <property type="entry name" value="Prolyl endopeptidase"/>
    <property type="match status" value="1"/>
</dbReference>
<dbReference type="FunFam" id="3.40.50.1820:FF:000005">
    <property type="entry name" value="Prolyl endopeptidase"/>
    <property type="match status" value="1"/>
</dbReference>
<dbReference type="FunFam" id="3.40.50.1820:FF:000275">
    <property type="entry name" value="Prolyl endopeptidase"/>
    <property type="match status" value="1"/>
</dbReference>
<dbReference type="Gene3D" id="3.40.50.1820">
    <property type="entry name" value="alpha/beta hydrolase"/>
    <property type="match status" value="1"/>
</dbReference>
<dbReference type="Gene3D" id="2.130.10.120">
    <property type="entry name" value="Prolyl oligopeptidase, N-terminal domain"/>
    <property type="match status" value="1"/>
</dbReference>
<dbReference type="InterPro" id="IPR029058">
    <property type="entry name" value="AB_hydrolase_fold"/>
</dbReference>
<dbReference type="InterPro" id="IPR002471">
    <property type="entry name" value="Pept_S9_AS"/>
</dbReference>
<dbReference type="InterPro" id="IPR023302">
    <property type="entry name" value="Pept_S9A_N"/>
</dbReference>
<dbReference type="InterPro" id="IPR001375">
    <property type="entry name" value="Peptidase_S9_cat"/>
</dbReference>
<dbReference type="InterPro" id="IPR002470">
    <property type="entry name" value="Peptidase_S9A"/>
</dbReference>
<dbReference type="InterPro" id="IPR051167">
    <property type="entry name" value="Prolyl_oligopep/macrocyclase"/>
</dbReference>
<dbReference type="PANTHER" id="PTHR42881">
    <property type="entry name" value="PROLYL ENDOPEPTIDASE"/>
    <property type="match status" value="1"/>
</dbReference>
<dbReference type="PANTHER" id="PTHR42881:SF2">
    <property type="entry name" value="PROLYL ENDOPEPTIDASE"/>
    <property type="match status" value="1"/>
</dbReference>
<dbReference type="Pfam" id="PF00326">
    <property type="entry name" value="Peptidase_S9"/>
    <property type="match status" value="1"/>
</dbReference>
<dbReference type="Pfam" id="PF02897">
    <property type="entry name" value="Peptidase_S9_N"/>
    <property type="match status" value="1"/>
</dbReference>
<dbReference type="PRINTS" id="PR00862">
    <property type="entry name" value="PROLIGOPTASE"/>
</dbReference>
<dbReference type="SUPFAM" id="SSF53474">
    <property type="entry name" value="alpha/beta-Hydrolases"/>
    <property type="match status" value="1"/>
</dbReference>
<dbReference type="SUPFAM" id="SSF50993">
    <property type="entry name" value="Peptidase/esterase 'gauge' domain"/>
    <property type="match status" value="1"/>
</dbReference>
<dbReference type="PROSITE" id="PS00708">
    <property type="entry name" value="PRO_ENDOPEP_SER"/>
    <property type="match status" value="1"/>
</dbReference>
<keyword id="KW-0007">Acetylation</keyword>
<keyword id="KW-0963">Cytoplasm</keyword>
<keyword id="KW-0378">Hydrolase</keyword>
<keyword id="KW-0645">Protease</keyword>
<keyword id="KW-1185">Reference proteome</keyword>
<keyword id="KW-0720">Serine protease</keyword>
<proteinExistence type="evidence at protein level"/>
<name>PPCE_MOUSE</name>
<gene>
    <name type="primary">Prep</name>
    <name type="synonym">Pep</name>
</gene>
<evidence type="ECO:0000250" key="1">
    <source>
        <dbReference type="UniProtKB" id="P48147"/>
    </source>
</evidence>
<evidence type="ECO:0000255" key="2">
    <source>
        <dbReference type="PROSITE-ProRule" id="PRU10084"/>
    </source>
</evidence>
<evidence type="ECO:0000269" key="3">
    <source>
    </source>
</evidence>
<evidence type="ECO:0000305" key="4"/>
<protein>
    <recommendedName>
        <fullName>Prolyl endopeptidase</fullName>
        <shortName>PE</shortName>
        <ecNumber>3.4.21.26</ecNumber>
    </recommendedName>
    <alternativeName>
        <fullName>Post-proline cleaving enzyme</fullName>
    </alternativeName>
</protein>
<sequence>MLSFQYPDVYRDETSVQEYHGHKICDPYSWLEDPDSEQTKAFVEAQNKITVPFLEQCPIRGLYKERMTELYDYPKYSCHFKKGKRYFYFYNTGLQNQRVLYVQDSLEGEARVFLDPNTLSDDGTVALRGYAFSEDGEYFAYGLSASGSDWVTIKFMKVDGAKELPDVLERVKFTCMAWTHDGKGMFYNSYPQQDGKSDGTETSTNLHQKLCYHVLGTDQSEDILCAEFPDEPKWMGGAELSDDGRYVLLSIWEGCDPVNRLWYCDLQQEPNGITGILKWVKLIDNFEGEYDYVTNEGTVFTFKTNRNSPNYRLINIDFTDPDESKWKVLVPEHEKDVLEWVACVRSNFLVLCYLHDVKNILQLHDLTTGALLKTFPLDVGSVVGYSGRKKDSEIFYQFTSFLSPGVIYHCDLTKEELEPMVFREVTVKGIDAADYQTIQIFYPSKDGTKIPMFIVHKKGIKLDGSHPAFLYGYGGFNISITPNYSVSRLIFVRHMGGVLAVANIRGGGEYGETWHKGGILANKQNCFDDFQCAAEYLIKEGYTSPKRLTINGGSNGGLLVAACANQRPDLFGCVIAQVGVMDMLKFHKFTIGHAWTTDYGCSDTKQHFEWLLKYSPLHNVKLPEADDIQYPSMLLLTADHDDRVVPLHSLKFIATLQYIVGRSRKQSNPLLIHVDTKAGHGAGKPTAKVIEEVSDMFAFIARCLNIEWIQ</sequence>
<comment type="function">
    <text>Cleaves peptide bonds on the C-terminal side of prolyl residues within peptides that are up to approximately 30 amino acids long.</text>
</comment>
<comment type="catalytic activity">
    <reaction>
        <text>Hydrolysis of Pro-|-Xaa &gt;&gt; Ala-|-Xaa in oligopeptides.</text>
        <dbReference type="EC" id="3.4.21.26"/>
    </reaction>
</comment>
<comment type="subcellular location">
    <subcellularLocation>
        <location evidence="3">Cytoplasm</location>
    </subcellularLocation>
</comment>
<comment type="similarity">
    <text evidence="4">Belongs to the peptidase S9A family.</text>
</comment>
<reference key="1">
    <citation type="journal article" date="1998" name="J. Biochem.">
        <title>cDNA cloning of mouse prolyl endopeptidase and its involvement in DNA synthesis by Swiss 3T3 cells.</title>
        <authorList>
            <person name="Ishino T."/>
            <person name="Ohtsuki S."/>
            <person name="Homma K."/>
            <person name="Natori S."/>
        </authorList>
    </citation>
    <scope>NUCLEOTIDE SEQUENCE [MRNA]</scope>
    <source>
        <tissue>Brain</tissue>
    </source>
</reference>
<reference key="2">
    <citation type="journal article" date="1999" name="J. Biol. Chem.">
        <title>Structure and localization of the mouse prolyl oligopeptidase gene.</title>
        <authorList>
            <person name="Kimura A."/>
            <person name="Yoshida I."/>
            <person name="Takagi N."/>
            <person name="Takahashi T."/>
        </authorList>
    </citation>
    <scope>NUCLEOTIDE SEQUENCE [GENOMIC DNA]</scope>
</reference>
<reference key="3">
    <citation type="journal article" date="2004" name="Genome Res.">
        <title>The status, quality, and expansion of the NIH full-length cDNA project: the Mammalian Gene Collection (MGC).</title>
        <authorList>
            <consortium name="The MGC Project Team"/>
        </authorList>
    </citation>
    <scope>NUCLEOTIDE SEQUENCE [LARGE SCALE MRNA]</scope>
    <source>
        <strain>FVB/N</strain>
        <tissue>Limb</tissue>
        <tissue>Mammary gland</tissue>
    </source>
</reference>
<reference key="4">
    <citation type="journal article" date="2010" name="Cell">
        <title>A tissue-specific atlas of mouse protein phosphorylation and expression.</title>
        <authorList>
            <person name="Huttlin E.L."/>
            <person name="Jedrychowski M.P."/>
            <person name="Elias J.E."/>
            <person name="Goswami T."/>
            <person name="Rad R."/>
            <person name="Beausoleil S.A."/>
            <person name="Villen J."/>
            <person name="Haas W."/>
            <person name="Sowa M.E."/>
            <person name="Gygi S.P."/>
        </authorList>
    </citation>
    <scope>IDENTIFICATION BY MASS SPECTROMETRY [LARGE SCALE ANALYSIS]</scope>
    <source>
        <tissue>Brain</tissue>
        <tissue>Brown adipose tissue</tissue>
        <tissue>Heart</tissue>
        <tissue>Kidney</tissue>
        <tissue>Liver</tissue>
        <tissue>Lung</tissue>
        <tissue>Pancreas</tissue>
        <tissue>Spleen</tissue>
        <tissue>Testis</tissue>
    </source>
</reference>
<reference key="5">
    <citation type="journal article" date="2023" name="Biomolecules">
        <title>D-Aspartate Depletion Perturbs Steroidogenesis and Spermatogenesis in Mice.</title>
        <authorList>
            <person name="Santillo A."/>
            <person name="Falvo S."/>
            <person name="Venditti M."/>
            <person name="Di Maio A."/>
            <person name="Chieffi Baccari G."/>
            <person name="Errico F."/>
            <person name="Usiello A."/>
            <person name="Minucci S."/>
            <person name="Di Fiore M.M."/>
        </authorList>
    </citation>
    <scope>SUBCELLULAR LOCATION</scope>
</reference>
<accession>Q9QUR6</accession>
<accession>Q80YS1</accession>
<feature type="chain" id="PRO_0000122402" description="Prolyl endopeptidase">
    <location>
        <begin position="1"/>
        <end position="710"/>
    </location>
</feature>
<feature type="active site" description="Charge relay system" evidence="2">
    <location>
        <position position="554"/>
    </location>
</feature>
<feature type="active site" description="Charge relay system" evidence="2">
    <location>
        <position position="641"/>
    </location>
</feature>
<feature type="active site" description="Charge relay system" evidence="2">
    <location>
        <position position="680"/>
    </location>
</feature>
<feature type="modified residue" description="N-acetylmethionine" evidence="1">
    <location>
        <position position="1"/>
    </location>
</feature>
<feature type="modified residue" description="N6-acetyllysine" evidence="1">
    <location>
        <position position="157"/>
    </location>
</feature>
<organism>
    <name type="scientific">Mus musculus</name>
    <name type="common">Mouse</name>
    <dbReference type="NCBI Taxonomy" id="10090"/>
    <lineage>
        <taxon>Eukaryota</taxon>
        <taxon>Metazoa</taxon>
        <taxon>Chordata</taxon>
        <taxon>Craniata</taxon>
        <taxon>Vertebrata</taxon>
        <taxon>Euteleostomi</taxon>
        <taxon>Mammalia</taxon>
        <taxon>Eutheria</taxon>
        <taxon>Euarchontoglires</taxon>
        <taxon>Glires</taxon>
        <taxon>Rodentia</taxon>
        <taxon>Myomorpha</taxon>
        <taxon>Muroidea</taxon>
        <taxon>Muridae</taxon>
        <taxon>Murinae</taxon>
        <taxon>Mus</taxon>
        <taxon>Mus</taxon>
    </lineage>
</organism>